<protein>
    <recommendedName>
        <fullName evidence="1">Lipoyl synthase</fullName>
        <ecNumber evidence="1">2.8.1.8</ecNumber>
    </recommendedName>
    <alternativeName>
        <fullName evidence="1">Lip-syn</fullName>
        <shortName evidence="1">LS</shortName>
    </alternativeName>
    <alternativeName>
        <fullName evidence="1">Lipoate synthase</fullName>
    </alternativeName>
    <alternativeName>
        <fullName evidence="1">Lipoic acid synthase</fullName>
    </alternativeName>
    <alternativeName>
        <fullName evidence="1">Sulfur insertion protein LipA</fullName>
    </alternativeName>
</protein>
<evidence type="ECO:0000255" key="1">
    <source>
        <dbReference type="HAMAP-Rule" id="MF_00206"/>
    </source>
</evidence>
<evidence type="ECO:0000255" key="2">
    <source>
        <dbReference type="PROSITE-ProRule" id="PRU01266"/>
    </source>
</evidence>
<evidence type="ECO:0000256" key="3">
    <source>
        <dbReference type="SAM" id="MobiDB-lite"/>
    </source>
</evidence>
<organism>
    <name type="scientific">Brucella suis (strain ATCC 23445 / NCTC 10510)</name>
    <dbReference type="NCBI Taxonomy" id="470137"/>
    <lineage>
        <taxon>Bacteria</taxon>
        <taxon>Pseudomonadati</taxon>
        <taxon>Pseudomonadota</taxon>
        <taxon>Alphaproteobacteria</taxon>
        <taxon>Hyphomicrobiales</taxon>
        <taxon>Brucellaceae</taxon>
        <taxon>Brucella/Ochrobactrum group</taxon>
        <taxon>Brucella</taxon>
    </lineage>
</organism>
<keyword id="KW-0004">4Fe-4S</keyword>
<keyword id="KW-0963">Cytoplasm</keyword>
<keyword id="KW-0408">Iron</keyword>
<keyword id="KW-0411">Iron-sulfur</keyword>
<keyword id="KW-0479">Metal-binding</keyword>
<keyword id="KW-0949">S-adenosyl-L-methionine</keyword>
<keyword id="KW-0808">Transferase</keyword>
<gene>
    <name evidence="1" type="primary">lipA</name>
    <name type="ordered locus">BSUIS_A1173</name>
</gene>
<reference key="1">
    <citation type="submission" date="2007-12" db="EMBL/GenBank/DDBJ databases">
        <title>Brucella suis ATCC 23445 whole genome shotgun sequencing project.</title>
        <authorList>
            <person name="Setubal J.C."/>
            <person name="Bowns C."/>
            <person name="Boyle S."/>
            <person name="Crasta O.R."/>
            <person name="Czar M.J."/>
            <person name="Dharmanolla C."/>
            <person name="Gillespie J.J."/>
            <person name="Kenyon R.W."/>
            <person name="Lu J."/>
            <person name="Mane S."/>
            <person name="Mohapatra S."/>
            <person name="Nagrani S."/>
            <person name="Purkayastha A."/>
            <person name="Rajasimha H.K."/>
            <person name="Shallom J.M."/>
            <person name="Shallom S."/>
            <person name="Shukla M."/>
            <person name="Snyder E.E."/>
            <person name="Sobral B.W."/>
            <person name="Wattam A.R."/>
            <person name="Will R."/>
            <person name="Williams K."/>
            <person name="Yoo H."/>
            <person name="Bruce D."/>
            <person name="Detter C."/>
            <person name="Munk C."/>
            <person name="Brettin T.S."/>
        </authorList>
    </citation>
    <scope>NUCLEOTIDE SEQUENCE [LARGE SCALE GENOMIC DNA]</scope>
    <source>
        <strain>ATCC 23445 / NCTC 10510</strain>
    </source>
</reference>
<name>LIPA_BRUSI</name>
<dbReference type="EC" id="2.8.1.8" evidence="1"/>
<dbReference type="EMBL" id="CP000911">
    <property type="protein sequence ID" value="ABY38225.1"/>
    <property type="molecule type" value="Genomic_DNA"/>
</dbReference>
<dbReference type="RefSeq" id="WP_002964253.1">
    <property type="nucleotide sequence ID" value="NC_010169.1"/>
</dbReference>
<dbReference type="SMR" id="B0CGS4"/>
<dbReference type="GeneID" id="97533623"/>
<dbReference type="KEGG" id="bmt:BSUIS_A1173"/>
<dbReference type="HOGENOM" id="CLU_033144_2_1_5"/>
<dbReference type="UniPathway" id="UPA00538">
    <property type="reaction ID" value="UER00593"/>
</dbReference>
<dbReference type="Proteomes" id="UP000008545">
    <property type="component" value="Chromosome I"/>
</dbReference>
<dbReference type="GO" id="GO:0005737">
    <property type="term" value="C:cytoplasm"/>
    <property type="evidence" value="ECO:0007669"/>
    <property type="project" value="UniProtKB-SubCell"/>
</dbReference>
<dbReference type="GO" id="GO:0051539">
    <property type="term" value="F:4 iron, 4 sulfur cluster binding"/>
    <property type="evidence" value="ECO:0007669"/>
    <property type="project" value="UniProtKB-UniRule"/>
</dbReference>
<dbReference type="GO" id="GO:0016992">
    <property type="term" value="F:lipoate synthase activity"/>
    <property type="evidence" value="ECO:0007669"/>
    <property type="project" value="UniProtKB-UniRule"/>
</dbReference>
<dbReference type="GO" id="GO:0046872">
    <property type="term" value="F:metal ion binding"/>
    <property type="evidence" value="ECO:0007669"/>
    <property type="project" value="UniProtKB-KW"/>
</dbReference>
<dbReference type="CDD" id="cd01335">
    <property type="entry name" value="Radical_SAM"/>
    <property type="match status" value="1"/>
</dbReference>
<dbReference type="FunFam" id="3.20.20.70:FF:000040">
    <property type="entry name" value="Lipoyl synthase"/>
    <property type="match status" value="1"/>
</dbReference>
<dbReference type="Gene3D" id="3.20.20.70">
    <property type="entry name" value="Aldolase class I"/>
    <property type="match status" value="1"/>
</dbReference>
<dbReference type="HAMAP" id="MF_00206">
    <property type="entry name" value="Lipoyl_synth"/>
    <property type="match status" value="1"/>
</dbReference>
<dbReference type="InterPro" id="IPR013785">
    <property type="entry name" value="Aldolase_TIM"/>
</dbReference>
<dbReference type="InterPro" id="IPR006638">
    <property type="entry name" value="Elp3/MiaA/NifB-like_rSAM"/>
</dbReference>
<dbReference type="InterPro" id="IPR031691">
    <property type="entry name" value="LIAS_N"/>
</dbReference>
<dbReference type="InterPro" id="IPR003698">
    <property type="entry name" value="Lipoyl_synth"/>
</dbReference>
<dbReference type="InterPro" id="IPR007197">
    <property type="entry name" value="rSAM"/>
</dbReference>
<dbReference type="NCBIfam" id="TIGR00510">
    <property type="entry name" value="lipA"/>
    <property type="match status" value="1"/>
</dbReference>
<dbReference type="NCBIfam" id="NF004019">
    <property type="entry name" value="PRK05481.1"/>
    <property type="match status" value="1"/>
</dbReference>
<dbReference type="NCBIfam" id="NF009544">
    <property type="entry name" value="PRK12928.1"/>
    <property type="match status" value="1"/>
</dbReference>
<dbReference type="PANTHER" id="PTHR10949">
    <property type="entry name" value="LIPOYL SYNTHASE"/>
    <property type="match status" value="1"/>
</dbReference>
<dbReference type="PANTHER" id="PTHR10949:SF0">
    <property type="entry name" value="LIPOYL SYNTHASE, MITOCHONDRIAL"/>
    <property type="match status" value="1"/>
</dbReference>
<dbReference type="Pfam" id="PF16881">
    <property type="entry name" value="LIAS_N"/>
    <property type="match status" value="1"/>
</dbReference>
<dbReference type="Pfam" id="PF04055">
    <property type="entry name" value="Radical_SAM"/>
    <property type="match status" value="1"/>
</dbReference>
<dbReference type="PIRSF" id="PIRSF005963">
    <property type="entry name" value="Lipoyl_synth"/>
    <property type="match status" value="1"/>
</dbReference>
<dbReference type="SFLD" id="SFLDF00271">
    <property type="entry name" value="lipoyl_synthase"/>
    <property type="match status" value="1"/>
</dbReference>
<dbReference type="SFLD" id="SFLDG01058">
    <property type="entry name" value="lipoyl_synthase_like"/>
    <property type="match status" value="1"/>
</dbReference>
<dbReference type="SMART" id="SM00729">
    <property type="entry name" value="Elp3"/>
    <property type="match status" value="1"/>
</dbReference>
<dbReference type="SUPFAM" id="SSF102114">
    <property type="entry name" value="Radical SAM enzymes"/>
    <property type="match status" value="1"/>
</dbReference>
<dbReference type="PROSITE" id="PS51918">
    <property type="entry name" value="RADICAL_SAM"/>
    <property type="match status" value="1"/>
</dbReference>
<feature type="chain" id="PRO_1000077951" description="Lipoyl synthase">
    <location>
        <begin position="1"/>
        <end position="322"/>
    </location>
</feature>
<feature type="domain" description="Radical SAM core" evidence="2">
    <location>
        <begin position="72"/>
        <end position="288"/>
    </location>
</feature>
<feature type="region of interest" description="Disordered" evidence="3">
    <location>
        <begin position="1"/>
        <end position="22"/>
    </location>
</feature>
<feature type="compositionally biased region" description="Polar residues" evidence="3">
    <location>
        <begin position="1"/>
        <end position="12"/>
    </location>
</feature>
<feature type="binding site" evidence="1">
    <location>
        <position position="60"/>
    </location>
    <ligand>
        <name>[4Fe-4S] cluster</name>
        <dbReference type="ChEBI" id="CHEBI:49883"/>
        <label>1</label>
    </ligand>
</feature>
<feature type="binding site" evidence="1">
    <location>
        <position position="65"/>
    </location>
    <ligand>
        <name>[4Fe-4S] cluster</name>
        <dbReference type="ChEBI" id="CHEBI:49883"/>
        <label>1</label>
    </ligand>
</feature>
<feature type="binding site" evidence="1">
    <location>
        <position position="71"/>
    </location>
    <ligand>
        <name>[4Fe-4S] cluster</name>
        <dbReference type="ChEBI" id="CHEBI:49883"/>
        <label>1</label>
    </ligand>
</feature>
<feature type="binding site" evidence="1">
    <location>
        <position position="86"/>
    </location>
    <ligand>
        <name>[4Fe-4S] cluster</name>
        <dbReference type="ChEBI" id="CHEBI:49883"/>
        <label>2</label>
        <note>4Fe-4S-S-AdoMet</note>
    </ligand>
</feature>
<feature type="binding site" evidence="1">
    <location>
        <position position="90"/>
    </location>
    <ligand>
        <name>[4Fe-4S] cluster</name>
        <dbReference type="ChEBI" id="CHEBI:49883"/>
        <label>2</label>
        <note>4Fe-4S-S-AdoMet</note>
    </ligand>
</feature>
<feature type="binding site" evidence="1">
    <location>
        <position position="93"/>
    </location>
    <ligand>
        <name>[4Fe-4S] cluster</name>
        <dbReference type="ChEBI" id="CHEBI:49883"/>
        <label>2</label>
        <note>4Fe-4S-S-AdoMet</note>
    </ligand>
</feature>
<feature type="binding site" evidence="1">
    <location>
        <position position="299"/>
    </location>
    <ligand>
        <name>[4Fe-4S] cluster</name>
        <dbReference type="ChEBI" id="CHEBI:49883"/>
        <label>1</label>
    </ligand>
</feature>
<proteinExistence type="inferred from homology"/>
<accession>B0CGS4</accession>
<comment type="function">
    <text evidence="1">Catalyzes the radical-mediated insertion of two sulfur atoms into the C-6 and C-8 positions of the octanoyl moiety bound to the lipoyl domains of lipoate-dependent enzymes, thereby converting the octanoylated domains into lipoylated derivatives.</text>
</comment>
<comment type="catalytic activity">
    <reaction evidence="1">
        <text>[[Fe-S] cluster scaffold protein carrying a second [4Fe-4S](2+) cluster] + N(6)-octanoyl-L-lysyl-[protein] + 2 oxidized [2Fe-2S]-[ferredoxin] + 2 S-adenosyl-L-methionine + 4 H(+) = [[Fe-S] cluster scaffold protein] + N(6)-[(R)-dihydrolipoyl]-L-lysyl-[protein] + 4 Fe(3+) + 2 hydrogen sulfide + 2 5'-deoxyadenosine + 2 L-methionine + 2 reduced [2Fe-2S]-[ferredoxin]</text>
        <dbReference type="Rhea" id="RHEA:16585"/>
        <dbReference type="Rhea" id="RHEA-COMP:9928"/>
        <dbReference type="Rhea" id="RHEA-COMP:10000"/>
        <dbReference type="Rhea" id="RHEA-COMP:10001"/>
        <dbReference type="Rhea" id="RHEA-COMP:10475"/>
        <dbReference type="Rhea" id="RHEA-COMP:14568"/>
        <dbReference type="Rhea" id="RHEA-COMP:14569"/>
        <dbReference type="ChEBI" id="CHEBI:15378"/>
        <dbReference type="ChEBI" id="CHEBI:17319"/>
        <dbReference type="ChEBI" id="CHEBI:29034"/>
        <dbReference type="ChEBI" id="CHEBI:29919"/>
        <dbReference type="ChEBI" id="CHEBI:33722"/>
        <dbReference type="ChEBI" id="CHEBI:33737"/>
        <dbReference type="ChEBI" id="CHEBI:33738"/>
        <dbReference type="ChEBI" id="CHEBI:57844"/>
        <dbReference type="ChEBI" id="CHEBI:59789"/>
        <dbReference type="ChEBI" id="CHEBI:78809"/>
        <dbReference type="ChEBI" id="CHEBI:83100"/>
        <dbReference type="EC" id="2.8.1.8"/>
    </reaction>
</comment>
<comment type="cofactor">
    <cofactor evidence="1">
        <name>[4Fe-4S] cluster</name>
        <dbReference type="ChEBI" id="CHEBI:49883"/>
    </cofactor>
    <text evidence="1">Binds 2 [4Fe-4S] clusters per subunit. One cluster is coordinated with 3 cysteines and an exchangeable S-adenosyl-L-methionine.</text>
</comment>
<comment type="pathway">
    <text evidence="1">Protein modification; protein lipoylation via endogenous pathway; protein N(6)-(lipoyl)lysine from octanoyl-[acyl-carrier-protein]: step 2/2.</text>
</comment>
<comment type="subcellular location">
    <subcellularLocation>
        <location evidence="1">Cytoplasm</location>
    </subcellularLocation>
</comment>
<comment type="similarity">
    <text evidence="1">Belongs to the radical SAM superfamily. Lipoyl synthase family.</text>
</comment>
<sequence>MVTVLNTVNQSGRLRHPEKAHRPDNEVLKKPDWIRVKAPVSRGYGETREIVRSNKLVTVCEEAGCPNIGECWEKKHATFMIMGEICTRACAFCNISTGIPNALDPNEPENIAKAVKQMGLTHVVITSVDRDDLADGGAHHFAEVIKAVREAAPATTIEILTPDFLRKEGALEIVVKARPDVFNHNLETVPSKYLKVRPGARYFHSIRLLQRVKELDPTIFTKSGIMVGLGEERNEILQLMDDLRSADVDFMTIGQYLQPTRKHHPVIRFVKPDEFKSFETIGKTKGFLLVASSPLTRSSHHAGEDFAKLKAAREALYASRAS</sequence>